<keyword id="KW-0596">Phosphopantetheine</keyword>
<keyword id="KW-0597">Phosphoprotein</keyword>
<keyword id="KW-0808">Transferase</keyword>
<evidence type="ECO:0000250" key="1">
    <source>
        <dbReference type="UniProtKB" id="J4UHQ6"/>
    </source>
</evidence>
<evidence type="ECO:0000255" key="2"/>
<evidence type="ECO:0000255" key="3">
    <source>
        <dbReference type="PROSITE-ProRule" id="PRU00258"/>
    </source>
</evidence>
<evidence type="ECO:0000255" key="4">
    <source>
        <dbReference type="PROSITE-ProRule" id="PRU01348"/>
    </source>
</evidence>
<evidence type="ECO:0000255" key="5">
    <source>
        <dbReference type="PROSITE-ProRule" id="PRU01363"/>
    </source>
</evidence>
<evidence type="ECO:0000255" key="6">
    <source>
        <dbReference type="PROSITE-ProRule" id="PRU10022"/>
    </source>
</evidence>
<evidence type="ECO:0000269" key="7">
    <source>
    </source>
</evidence>
<evidence type="ECO:0000303" key="8">
    <source>
    </source>
</evidence>
<evidence type="ECO:0000305" key="9">
    <source>
    </source>
</evidence>
<accession>P9WES2</accession>
<comment type="function">
    <text evidence="7">Non-reducing polyketide synthase that synthesizes the universal anthraquinone precursor atrochrysone carboxylic acid from malonyl-CoA (PubMed:35218274). Produces a mixture of both 3R and 3S enantiomers with an excess of the 3S form (PubMed:35218274). PKS4 catalyzes both hepta- and octaketide synthesis and also yields 6-hydroxymusizin, probably via carboxylating activity inherent to the KS domain (PubMed:35218274).</text>
</comment>
<comment type="catalytic activity">
    <reaction evidence="7">
        <text>holo-[ACP] + 8 malonyl-CoA + 8 H(+) = atrochrysone carboxyl-[ACP] + 8 CO2 + 8 CoA + 2 H2O</text>
        <dbReference type="Rhea" id="RHEA:64232"/>
        <dbReference type="Rhea" id="RHEA-COMP:9685"/>
        <dbReference type="Rhea" id="RHEA-COMP:16552"/>
        <dbReference type="ChEBI" id="CHEBI:15377"/>
        <dbReference type="ChEBI" id="CHEBI:15378"/>
        <dbReference type="ChEBI" id="CHEBI:16526"/>
        <dbReference type="ChEBI" id="CHEBI:57287"/>
        <dbReference type="ChEBI" id="CHEBI:57384"/>
        <dbReference type="ChEBI" id="CHEBI:64479"/>
        <dbReference type="ChEBI" id="CHEBI:149712"/>
    </reaction>
    <physiologicalReaction direction="left-to-right" evidence="7">
        <dbReference type="Rhea" id="RHEA:64233"/>
    </physiologicalReaction>
</comment>
<comment type="pathway">
    <text evidence="7">Secondary metabolite biosynthesis.</text>
</comment>
<comment type="domain">
    <text evidence="9">Multidomain protein; including a ketosynthase (KS) that catalyzes repeated decarboxylative condensation to elongate the polyketide backbone; a malonyl-CoA:ACP transacylase (MAT) that selects and transfers the extender unit malonyl-CoA; a product template (PT) domain that controls the immediate cyclization regioselectivity of the reactive polyketide backbone; an acyl-carrier protein (ACP) that serves as the tether of the growing and completed polyketide via its phosphopantetheinyl arm; and an alpha/beta hydrolase superfamily-type thioesterase (TE) domain.</text>
</comment>
<comment type="domain">
    <text evidence="9">An extraordinary feature of PKS4 is a repetitive proline-rich region (9-20% proline residues) between the ACP and TE domains.</text>
</comment>
<comment type="miscellaneous">
    <text evidence="7">PKS4 is part of a new class of atrochrysone carboxylic acid synthases (ACAS) with unusual domain architecture and illustrates how the biosynthesis of bioactive natural metabolites evolvedi ndependently in various groups of life.</text>
</comment>
<feature type="chain" id="PRO_0000457009" description="Atrochrysone carboxylic acid synthase PKS4">
    <location>
        <begin position="1"/>
        <end position="1666"/>
    </location>
</feature>
<feature type="domain" description="Ketosynthase family 3 (KS3)" evidence="4">
    <location>
        <begin position="15"/>
        <end position="452"/>
    </location>
</feature>
<feature type="domain" description="PKS/mFAS DH" evidence="5">
    <location>
        <begin position="905"/>
        <end position="1206"/>
    </location>
</feature>
<feature type="domain" description="Carrier" evidence="3 9">
    <location>
        <begin position="1331"/>
        <end position="1395"/>
    </location>
</feature>
<feature type="region of interest" description="Malonyl-CoA:ACP transacylase (MAT) domain" evidence="2 9">
    <location>
        <begin position="555"/>
        <end position="863"/>
    </location>
</feature>
<feature type="region of interest" description="N-terminal hotdog fold" evidence="5">
    <location>
        <begin position="905"/>
        <end position="1034"/>
    </location>
</feature>
<feature type="region of interest" description="Product template (PT) domain" evidence="2 9">
    <location>
        <begin position="935"/>
        <end position="1203"/>
    </location>
</feature>
<feature type="region of interest" description="C-terminal hotdog fold" evidence="5">
    <location>
        <begin position="1050"/>
        <end position="1206"/>
    </location>
</feature>
<feature type="region of interest" description="Proline-rich linker region" evidence="9">
    <location>
        <begin position="1334"/>
        <end position="1397"/>
    </location>
</feature>
<feature type="region of interest" description="Alpha/beta hydrolase superfamily-type thioesterase (TE) domain" evidence="2 9">
    <location>
        <begin position="1444"/>
        <end position="1529"/>
    </location>
</feature>
<feature type="active site" description="For beta-ketoacyl synthase activity" evidence="6">
    <location>
        <position position="194"/>
    </location>
</feature>
<feature type="active site" description="For beta-ketoacyl synthase activity" evidence="4">
    <location>
        <position position="332"/>
    </location>
</feature>
<feature type="active site" description="For beta-ketoacyl synthase activity" evidence="4">
    <location>
        <position position="372"/>
    </location>
</feature>
<feature type="active site" description="For acyl/malonyl transferase activity" evidence="1">
    <location>
        <position position="632"/>
    </location>
</feature>
<feature type="modified residue" description="O-(pantetheine 4'-phosphoryl)serine" evidence="3">
    <location>
        <position position="1269"/>
    </location>
</feature>
<dbReference type="EC" id="2.3.1.-" evidence="7"/>
<dbReference type="EMBL" id="OL512946">
    <property type="protein sequence ID" value="UMW72408.1"/>
    <property type="molecule type" value="Genomic_DNA"/>
</dbReference>
<dbReference type="SMR" id="P9WES2"/>
<dbReference type="GO" id="GO:0004312">
    <property type="term" value="F:fatty acid synthase activity"/>
    <property type="evidence" value="ECO:0007669"/>
    <property type="project" value="TreeGrafter"/>
</dbReference>
<dbReference type="GO" id="GO:0006633">
    <property type="term" value="P:fatty acid biosynthetic process"/>
    <property type="evidence" value="ECO:0007669"/>
    <property type="project" value="TreeGrafter"/>
</dbReference>
<dbReference type="GO" id="GO:0044550">
    <property type="term" value="P:secondary metabolite biosynthetic process"/>
    <property type="evidence" value="ECO:0007669"/>
    <property type="project" value="TreeGrafter"/>
</dbReference>
<dbReference type="CDD" id="cd00833">
    <property type="entry name" value="PKS"/>
    <property type="match status" value="1"/>
</dbReference>
<dbReference type="Gene3D" id="3.30.70.3290">
    <property type="match status" value="1"/>
</dbReference>
<dbReference type="Gene3D" id="3.40.47.10">
    <property type="match status" value="1"/>
</dbReference>
<dbReference type="Gene3D" id="3.40.50.1820">
    <property type="entry name" value="alpha/beta hydrolase"/>
    <property type="match status" value="1"/>
</dbReference>
<dbReference type="Gene3D" id="3.40.366.10">
    <property type="entry name" value="Malonyl-Coenzyme A Acyl Carrier Protein, domain 2"/>
    <property type="match status" value="1"/>
</dbReference>
<dbReference type="Gene3D" id="3.10.129.110">
    <property type="entry name" value="Polyketide synthase dehydratase"/>
    <property type="match status" value="1"/>
</dbReference>
<dbReference type="InterPro" id="IPR000073">
    <property type="entry name" value="AB_hydrolase_1"/>
</dbReference>
<dbReference type="InterPro" id="IPR029058">
    <property type="entry name" value="AB_hydrolase_fold"/>
</dbReference>
<dbReference type="InterPro" id="IPR001227">
    <property type="entry name" value="Ac_transferase_dom_sf"/>
</dbReference>
<dbReference type="InterPro" id="IPR036736">
    <property type="entry name" value="ACP-like_sf"/>
</dbReference>
<dbReference type="InterPro" id="IPR014043">
    <property type="entry name" value="Acyl_transferase_dom"/>
</dbReference>
<dbReference type="InterPro" id="IPR016035">
    <property type="entry name" value="Acyl_Trfase/lysoPLipase"/>
</dbReference>
<dbReference type="InterPro" id="IPR014031">
    <property type="entry name" value="Ketoacyl_synth_C"/>
</dbReference>
<dbReference type="InterPro" id="IPR014030">
    <property type="entry name" value="Ketoacyl_synth_N"/>
</dbReference>
<dbReference type="InterPro" id="IPR016036">
    <property type="entry name" value="Malonyl_transacylase_ACP-bd"/>
</dbReference>
<dbReference type="InterPro" id="IPR020841">
    <property type="entry name" value="PKS_Beta-ketoAc_synthase_dom"/>
</dbReference>
<dbReference type="InterPro" id="IPR042104">
    <property type="entry name" value="PKS_dehydratase_sf"/>
</dbReference>
<dbReference type="InterPro" id="IPR049900">
    <property type="entry name" value="PKS_mFAS_DH"/>
</dbReference>
<dbReference type="InterPro" id="IPR050091">
    <property type="entry name" value="PKS_NRPS_Biosynth_Enz"/>
</dbReference>
<dbReference type="InterPro" id="IPR006162">
    <property type="entry name" value="Ppantetheine_attach_site"/>
</dbReference>
<dbReference type="InterPro" id="IPR016039">
    <property type="entry name" value="Thiolase-like"/>
</dbReference>
<dbReference type="PANTHER" id="PTHR43775">
    <property type="entry name" value="FATTY ACID SYNTHASE"/>
    <property type="match status" value="1"/>
</dbReference>
<dbReference type="PANTHER" id="PTHR43775:SF37">
    <property type="entry name" value="SI:DKEY-61P9.11"/>
    <property type="match status" value="1"/>
</dbReference>
<dbReference type="Pfam" id="PF00561">
    <property type="entry name" value="Abhydrolase_1"/>
    <property type="match status" value="1"/>
</dbReference>
<dbReference type="Pfam" id="PF00698">
    <property type="entry name" value="Acyl_transf_1"/>
    <property type="match status" value="1"/>
</dbReference>
<dbReference type="Pfam" id="PF00109">
    <property type="entry name" value="ketoacyl-synt"/>
    <property type="match status" value="1"/>
</dbReference>
<dbReference type="Pfam" id="PF02801">
    <property type="entry name" value="Ketoacyl-synt_C"/>
    <property type="match status" value="1"/>
</dbReference>
<dbReference type="SMART" id="SM00827">
    <property type="entry name" value="PKS_AT"/>
    <property type="match status" value="1"/>
</dbReference>
<dbReference type="SMART" id="SM00825">
    <property type="entry name" value="PKS_KS"/>
    <property type="match status" value="1"/>
</dbReference>
<dbReference type="SUPFAM" id="SSF47336">
    <property type="entry name" value="ACP-like"/>
    <property type="match status" value="1"/>
</dbReference>
<dbReference type="SUPFAM" id="SSF53474">
    <property type="entry name" value="alpha/beta-Hydrolases"/>
    <property type="match status" value="1"/>
</dbReference>
<dbReference type="SUPFAM" id="SSF52151">
    <property type="entry name" value="FabD/lysophospholipase-like"/>
    <property type="match status" value="1"/>
</dbReference>
<dbReference type="SUPFAM" id="SSF55048">
    <property type="entry name" value="Probable ACP-binding domain of malonyl-CoA ACP transacylase"/>
    <property type="match status" value="1"/>
</dbReference>
<dbReference type="SUPFAM" id="SSF53901">
    <property type="entry name" value="Thiolase-like"/>
    <property type="match status" value="1"/>
</dbReference>
<dbReference type="PROSITE" id="PS52004">
    <property type="entry name" value="KS3_2"/>
    <property type="match status" value="1"/>
</dbReference>
<dbReference type="PROSITE" id="PS00012">
    <property type="entry name" value="PHOSPHOPANTETHEINE"/>
    <property type="match status" value="1"/>
</dbReference>
<dbReference type="PROSITE" id="PS52019">
    <property type="entry name" value="PKS_MFAS_DH"/>
    <property type="match status" value="1"/>
</dbReference>
<name>PKS4_CALOD</name>
<organism>
    <name type="scientific">Calonarius odorifer</name>
    <name type="common">Mushroom</name>
    <name type="synonym">Cortinarius odorifer</name>
    <dbReference type="NCBI Taxonomy" id="36062"/>
    <lineage>
        <taxon>Eukaryota</taxon>
        <taxon>Fungi</taxon>
        <taxon>Dikarya</taxon>
        <taxon>Basidiomycota</taxon>
        <taxon>Agaricomycotina</taxon>
        <taxon>Agaricomycetes</taxon>
        <taxon>Agaricomycetidae</taxon>
        <taxon>Agaricales</taxon>
        <taxon>Agaricineae</taxon>
        <taxon>Cortinariaceae</taxon>
        <taxon>Calonarius</taxon>
    </lineage>
</organism>
<proteinExistence type="evidence at protein level"/>
<reference key="1">
    <citation type="journal article" date="2022" name="Angew. Chem. Int. Ed.">
        <title>Unprecedented mushroom polyketide synthases produce the universal anthraquinone precursor.</title>
        <authorList>
            <person name="Loehr N.A."/>
            <person name="Eisen F."/>
            <person name="Thiele W."/>
            <person name="Platz L."/>
            <person name="Motter J."/>
            <person name="Huettel W."/>
            <person name="Gressler M."/>
            <person name="Mueller M."/>
            <person name="Hoffmeister D."/>
        </authorList>
    </citation>
    <scope>NUCLEOTIDE SEQUENCE [GENOMIC DNA]</scope>
    <scope>FUNCTION</scope>
    <scope>DOMAIN</scope>
    <scope>CATALYTIC ACTIVITY</scope>
</reference>
<protein>
    <recommendedName>
        <fullName evidence="8">Atrochrysone carboxylic acid synthase PKS4</fullName>
        <shortName evidence="8">ACAS</shortName>
        <ecNumber evidence="7">2.3.1.-</ecNumber>
    </recommendedName>
    <alternativeName>
        <fullName evidence="8">Non-reducing polyketide synthase 4</fullName>
    </alternativeName>
</protein>
<sequence>MPPNTVNKAAEIPPFEPIAIVGIGIRGPGGINSLTTLWDTLVERKSHCFPLAKDPRFQRRFNPDDFKALFDGIPDSENVLHANLFDETPGLDRTYFSLSEREAAGMDVQQKLLLHVAHEALEDAGYSGAEDGSAFDPSTFGVYVATATDEVIQDPRDYDTDIYHLVRTERAFLSGQICFHFGLRGPSSSVDTVCSGSITAINDACRALATGDCRAAIAGGVHVVTPVSGPISFYCIKRAGFLDRTGQCKPFLQNGTGYSRSEGCGLVVMKRLSDAIREGDRIHGVIRGLCIRSMASPKFISQPNGAFQSVALAQAVKISGVDPAAISFVEAHGPGTAKGDLAEVSSLCSVLAQHRAVDNPLTVGSLKGNVGHAEAASGTHSLAKVIAMFQRRRIPPQADFHPSRLNPTLQPFFDKHPIRIIENEEDWNASHRIAVVGNFGASGNAGFMVIEEGSTFQPLEGRDVPKVSSPLPFVISAKDQATLVKLIHLYIDWLKQPSTFLTPLSDISYAMTARRFIHPFMISVQADSHMDLVQKLQERPPMINGSANRTPREVAFCFSGQGGERVDPRDSTLYNFSASFTDAVDMCFRVAESENLVAEEDVAILELFALEFGLVEMWKSWGIKPVALAGHSFGEYVALVCAGVLTVRDALKLLGIRAALIRAMCLDVPGKMAAVRLPLSDVNKCLEQQKSTRVELACVNSDNSVTVAGTPEDLESFRQELLKWYPAASWHLLNNMTAAFHSRFVQPILADFTNACNEVKVHPSEMVVLSGLLGKMCPVGDAVLQQHDYLVRHCRETNRFGTAISDYQRQNVERETPQPDWLEIGSHSRIISFITPASDQLKLPSHGKSAGEGWMTALDALMRLYSAGHVVDFKDVHYDVNPSAHHTDLPLYPFQLEPHFYPARREVKASSTMLASTNEVQFCPRVPSTELAPLLLNHVMAGYTLCPATTHVALMMAAASTFASSSQQEGRLAYKLSKLKVIAGFTNTTDGWLQVRRQSSTSDLEIISNDDNKIHITARAEVCKEQDLLESLSLYASFILPFKSFKFLPSTDVLRKELAYSLFNHTVNYGPHGQVLDRVWIAEDGYQAWGYSTYPGGASTAEGVPSALRDFSPMLIESVCQLIGFLMNTSTNRKDGEAFVTDELGDCSIAISKLYETKYVEIYASYKMVDGGTAGLGNVFAFDDKGQLISAFRDVRMAKMKIYVLKRLIDRGRKPEQVVTTQHVASTEVEEDNVAHNDIDDKVISVLKAALRLSEIPLDKTLGELGLDSLTAIDVGVQLERLVPHRRDHLTIDPEGNLTSLLQLLRPTPLPKSLPITSSTKESKVETVDLATSPSLPIMPNGVPTTVNGVPKPNALPTVNGLHKPNGAPAANGVPTANGVPTADGTSTEPSQTLVANISPEMLQAISSNPEVIQYAPGRTPLLLIHDGGGTSFAYYSLGNLDRTVIGIHCPGLQEGKGIESVHHAANEYANIARQYLKQQCPGHSKVLIGGWSLGGTISMMMAALFPDLVAGVVTIDTTPPGVVGLTAQQAESVLLHPWSRTDGIHGLVRRQLQLNTRASFAHPEYKTIIRVTAVNVPVYVLCAIDPFRPSESLDLPKETYQWLLSFKQSDVAEVTWKELIGERLLGVQSVPGNHWTMFTPANVKATTEALKQGLDVIEARLNKMG</sequence>